<reference key="1">
    <citation type="journal article" date="2020" name="Biosci. Biotechnol. Biochem.">
        <title>Biosynthetic gene cluster identification and biological activity of lucilactaene from Fusarium sp. RK97-94.</title>
        <authorList>
            <person name="Kato S."/>
            <person name="Motoyama T."/>
            <person name="Futamura Y."/>
            <person name="Uramoto M."/>
            <person name="Nogawa T."/>
            <person name="Hayashi T."/>
            <person name="Hirota H."/>
            <person name="Tanaka A."/>
            <person name="Takahashi-Ando N."/>
            <person name="Kamakura T."/>
            <person name="Osada H."/>
        </authorList>
    </citation>
    <scope>NUCLEOTIDE SEQUENCE [GENOMIC DNA]</scope>
    <scope>FUNCTION</scope>
    <source>
        <strain>RK97-94</strain>
    </source>
</reference>
<reference key="2">
    <citation type="journal article" date="2022" name="J. Antibiot.">
        <title>Isolation of new lucilactaene derivatives from P450 monooxygenase and aldehyde dehydrogenase knockout Fusarium sp. RK97-94 strains and their biological activities.</title>
        <authorList>
            <person name="Abdelhakim I.A."/>
            <person name="Motoyama T."/>
            <person name="Nogawa T."/>
            <person name="Mahmud F.B."/>
            <person name="Futamura Y."/>
            <person name="Takahashi S."/>
            <person name="Osada H."/>
        </authorList>
    </citation>
    <scope>FUNCTION</scope>
    <scope>PATHWAY</scope>
</reference>
<accession>A0A6J4B4M6</accession>
<name>LUC6_FUSSX</name>
<gene>
    <name evidence="4" type="primary">LUC6</name>
</gene>
<sequence>MHQIFPSTFFNFEFLRLLGTAPYLGAETGECLATAARIKDGDPESWYQAWYEQAQKALALADEAKAVGDGPGAAWGYIRASNYFRASEFLLHCTPEDPRILSSAVASADAFDKGWILLDGSVRKVEIPYEGGNTLPGRLYLPAPHHQVSGKIPVVVQTGGFDSTQEELYYYGAAGALPRGYAVFSFDGPGQGLSLRKDKLYLRPDWEHVTSKVLDHVIGELAPVHNLDVDRLAVFGASLGGYLSLRAAADPRVKAVVSCDGPLDLFDITRSRMPPWFINGWLSGWLSDGFFNWVIDRLASVNFQLAWEFGHSKWVYGVKTPADVMRTMQKFSLKDGYLSKIKCPTLITGAADSFYFTPQQNAHPIFDSLSALGPAEKHLWIGKDVEGGGLQAKIGALALMHHKMFAWLDETFGIRRDEL</sequence>
<protein>
    <recommendedName>
        <fullName evidence="4">Hydrolase LUC6</fullName>
        <ecNumber evidence="6">3.7.1.-</ecNumber>
    </recommendedName>
    <alternativeName>
        <fullName evidence="4">Lucilactaene biosynthesis cluster protein 6</fullName>
    </alternativeName>
</protein>
<organism>
    <name type="scientific">Fusarium sp</name>
    <dbReference type="NCBI Taxonomy" id="29916"/>
    <lineage>
        <taxon>Eukaryota</taxon>
        <taxon>Fungi</taxon>
        <taxon>Dikarya</taxon>
        <taxon>Ascomycota</taxon>
        <taxon>Pezizomycotina</taxon>
        <taxon>Sordariomycetes</taxon>
        <taxon>Hypocreomycetidae</taxon>
        <taxon>Hypocreales</taxon>
        <taxon>Nectriaceae</taxon>
        <taxon>Fusarium</taxon>
    </lineage>
</organism>
<evidence type="ECO:0000250" key="1">
    <source>
        <dbReference type="UniProtKB" id="Q93NG6"/>
    </source>
</evidence>
<evidence type="ECO:0000269" key="2">
    <source>
    </source>
</evidence>
<evidence type="ECO:0000269" key="3">
    <source>
    </source>
</evidence>
<evidence type="ECO:0000303" key="4">
    <source>
    </source>
</evidence>
<evidence type="ECO:0000305" key="5"/>
<evidence type="ECO:0000305" key="6">
    <source>
    </source>
</evidence>
<feature type="chain" id="PRO_0000454639" description="Hydrolase LUC6">
    <location>
        <begin position="1"/>
        <end position="419"/>
    </location>
</feature>
<feature type="active site" evidence="1">
    <location>
        <position position="238"/>
    </location>
</feature>
<proteinExistence type="inferred from homology"/>
<comment type="function">
    <text evidence="2 3 6">Hydrolase; part of the gene cluster that mediates the biosynthesis of the mycotoxin lucilactaene and the lucilactaene-related compound NG-391 that act as cell cycle inhibitors with potent growth inhibitory activity against malarial parasites, moderate growth inhibitory activity against cancer cells, and no activity against bacteria and fungi (PubMed:32043422, PubMed:35484225). Within the pathway, LUC6 may catalyze the 2-pyrrolidone ring formation to form prelucilactaene C from prelucilactaene B, followed by C-15 hydroxylation by the same enzyme to give prelucilactaene D, epoxydation to yield prelucilactaene E, and finally cyclization to yield prelucilactaene F (Probable). The pathway begins with the hybrid PKS-NRPS synthetase LUC5 which is responsible for the condensation of one acetyl-coenzyme A (CoA) unit with six malonyl-CoA units and the amide linkage of the arising heptaketide and homoserine, subsequently releasing the first intermediate prelucilactaene B. Both the cytochrome P450 monooxygenase LUC2 and the hydrolase LUC6 function in parallel in modification of prelucilactaene B. LUC6 may catalyze the 2-pyrrolidone ring formation to form prelucilactaene C from prelucilactaene B, followed by C-15 hydroxylation by the same enzyme to give prelucilactaene D, which is then converted to prelucilactaene E by epoxidation, and finally to prelucilactaene F by cyclization. Prelucilactane D, prelucilactaene E, and prelucilactaene F can be converted to dihydrolucilactaene, NG391, and lucilactaene, respectively, via C-20 methyl group hydroxylation by the cytochrome P450 monooxygenase LUC2. However, LUC2, unlike FUS8 in fusarin C biosynthesis, is not enough for the full oxidation of the C-20 methyl group into carboxylic acid, which is a prerequisite for the final methylation step. The aldehyde dehydrogenase LUC3 is involved in the biosynthesis by further oxidation of the C-20 alcoholic analog prelucilactaene G into a carboxylic derivative. This unidentified carboxylic derivative may be converted to demethyllucilactaene. As the last step, the methyltransferase LUC1 methylates the hydroxyl group at C-21 of demethyllucilactaene to generate lucilactaene (Probable).</text>
</comment>
<comment type="pathway">
    <text evidence="6">Mycotoxin biosynthesis.</text>
</comment>
<comment type="similarity">
    <text evidence="5">Belongs to the AB hydrolase superfamily. FUS2 hydrolase family.</text>
</comment>
<keyword id="KW-0378">Hydrolase</keyword>
<dbReference type="EC" id="3.7.1.-" evidence="6"/>
<dbReference type="EMBL" id="LC515193">
    <property type="protein sequence ID" value="BBQ09586.1"/>
    <property type="molecule type" value="Genomic_DNA"/>
</dbReference>
<dbReference type="SMR" id="A0A6J4B4M6"/>
<dbReference type="ESTHER" id="fussx-luc6">
    <property type="family name" value="Duf_1100-S"/>
</dbReference>
<dbReference type="GO" id="GO:0016787">
    <property type="term" value="F:hydrolase activity"/>
    <property type="evidence" value="ECO:0007669"/>
    <property type="project" value="UniProtKB-KW"/>
</dbReference>
<dbReference type="Gene3D" id="1.20.1440.110">
    <property type="entry name" value="acylaminoacyl peptidase"/>
    <property type="match status" value="1"/>
</dbReference>
<dbReference type="Gene3D" id="3.40.50.1820">
    <property type="entry name" value="alpha/beta hydrolase"/>
    <property type="match status" value="1"/>
</dbReference>
<dbReference type="InterPro" id="IPR029058">
    <property type="entry name" value="AB_hydrolase_fold"/>
</dbReference>
<dbReference type="InterPro" id="IPR010520">
    <property type="entry name" value="FrsA-like"/>
</dbReference>
<dbReference type="InterPro" id="IPR050261">
    <property type="entry name" value="FrsA_esterase"/>
</dbReference>
<dbReference type="PANTHER" id="PTHR22946:SF13">
    <property type="entry name" value="ALPHA_BETA HYDROLASE PSOB"/>
    <property type="match status" value="1"/>
</dbReference>
<dbReference type="PANTHER" id="PTHR22946">
    <property type="entry name" value="DIENELACTONE HYDROLASE DOMAIN-CONTAINING PROTEIN-RELATED"/>
    <property type="match status" value="1"/>
</dbReference>
<dbReference type="Pfam" id="PF06500">
    <property type="entry name" value="FrsA-like"/>
    <property type="match status" value="1"/>
</dbReference>
<dbReference type="SUPFAM" id="SSF53474">
    <property type="entry name" value="alpha/beta-Hydrolases"/>
    <property type="match status" value="1"/>
</dbReference>